<dbReference type="EMBL" id="M36437">
    <property type="protein sequence ID" value="AAA27526.1"/>
    <property type="molecule type" value="Genomic_DNA"/>
</dbReference>
<dbReference type="EMBL" id="BA000032">
    <property type="protein sequence ID" value="BAC61569.1"/>
    <property type="molecule type" value="Genomic_DNA"/>
</dbReference>
<dbReference type="PIR" id="A53888">
    <property type="entry name" value="A53888"/>
</dbReference>
<dbReference type="RefSeq" id="NP_799736.1">
    <property type="nucleotide sequence ID" value="NC_004605.1"/>
</dbReference>
<dbReference type="RefSeq" id="WP_005481504.1">
    <property type="nucleotide sequence ID" value="NC_004605.1"/>
</dbReference>
<dbReference type="SMR" id="Q99289"/>
<dbReference type="GeneID" id="1190914"/>
<dbReference type="KEGG" id="vpa:VPA0226"/>
<dbReference type="PATRIC" id="fig|223926.6.peg.3181"/>
<dbReference type="eggNOG" id="COG3240">
    <property type="taxonomic scope" value="Bacteria"/>
</dbReference>
<dbReference type="HOGENOM" id="CLU_045229_0_0_6"/>
<dbReference type="Proteomes" id="UP000002493">
    <property type="component" value="Chromosome 2"/>
</dbReference>
<dbReference type="GO" id="GO:0005576">
    <property type="term" value="C:extracellular region"/>
    <property type="evidence" value="ECO:0007669"/>
    <property type="project" value="UniProtKB-SubCell"/>
</dbReference>
<dbReference type="GO" id="GO:0016298">
    <property type="term" value="F:lipase activity"/>
    <property type="evidence" value="ECO:0007669"/>
    <property type="project" value="InterPro"/>
</dbReference>
<dbReference type="GO" id="GO:0090729">
    <property type="term" value="F:toxin activity"/>
    <property type="evidence" value="ECO:0007669"/>
    <property type="project" value="UniProtKB-KW"/>
</dbReference>
<dbReference type="GO" id="GO:0031640">
    <property type="term" value="P:killing of cells of another organism"/>
    <property type="evidence" value="ECO:0007669"/>
    <property type="project" value="UniProtKB-KW"/>
</dbReference>
<dbReference type="GO" id="GO:0016042">
    <property type="term" value="P:lipid catabolic process"/>
    <property type="evidence" value="ECO:0007669"/>
    <property type="project" value="UniProtKB-KW"/>
</dbReference>
<dbReference type="CDD" id="cd01846">
    <property type="entry name" value="fatty_acyltransferase_like"/>
    <property type="match status" value="1"/>
</dbReference>
<dbReference type="Gene3D" id="3.40.50.1110">
    <property type="entry name" value="SGNH hydrolase"/>
    <property type="match status" value="1"/>
</dbReference>
<dbReference type="InterPro" id="IPR001087">
    <property type="entry name" value="GDSL"/>
</dbReference>
<dbReference type="InterPro" id="IPR050592">
    <property type="entry name" value="GDSL_lipolytic_enzyme"/>
</dbReference>
<dbReference type="InterPro" id="IPR008265">
    <property type="entry name" value="Lipase_GDSL_AS"/>
</dbReference>
<dbReference type="InterPro" id="IPR036514">
    <property type="entry name" value="SGNH_hydro_sf"/>
</dbReference>
<dbReference type="PANTHER" id="PTHR45642">
    <property type="entry name" value="GDSL ESTERASE/LIPASE EXL3"/>
    <property type="match status" value="1"/>
</dbReference>
<dbReference type="PANTHER" id="PTHR45642:SF141">
    <property type="entry name" value="SECRETED EFFECTOR PROTEIN SSEJ"/>
    <property type="match status" value="1"/>
</dbReference>
<dbReference type="Pfam" id="PF00657">
    <property type="entry name" value="Lipase_GDSL"/>
    <property type="match status" value="1"/>
</dbReference>
<dbReference type="SUPFAM" id="SSF52266">
    <property type="entry name" value="SGNH hydrolase"/>
    <property type="match status" value="1"/>
</dbReference>
<dbReference type="PROSITE" id="PS01098">
    <property type="entry name" value="LIPASE_GDSL_SER"/>
    <property type="match status" value="1"/>
</dbReference>
<reference key="1">
    <citation type="journal article" date="1986" name="Microb. Pathog.">
        <title>Comparison of the nucleotide sequences of the genes for the thermostable direct hemolysin and the thermolabile hemolysin from Vibrio parahaemolyticus.</title>
        <authorList>
            <person name="Taniguchi H."/>
            <person name="Hirano H."/>
            <person name="Kubomura S."/>
            <person name="Higashi K."/>
            <person name="Mizuguchi Y."/>
        </authorList>
    </citation>
    <scope>NUCLEOTIDE SEQUENCE [GENOMIC DNA]</scope>
</reference>
<reference key="2">
    <citation type="journal article" date="2003" name="Lancet">
        <title>Genome sequence of Vibrio parahaemolyticus: a pathogenic mechanism distinct from that of V. cholerae.</title>
        <authorList>
            <person name="Makino K."/>
            <person name="Oshima K."/>
            <person name="Kurokawa K."/>
            <person name="Yokoyama K."/>
            <person name="Uda T."/>
            <person name="Tagomori K."/>
            <person name="Iijima Y."/>
            <person name="Najima M."/>
            <person name="Nakano M."/>
            <person name="Yamashita A."/>
            <person name="Kubota Y."/>
            <person name="Kimura S."/>
            <person name="Yasunaga T."/>
            <person name="Honda T."/>
            <person name="Shinagawa H."/>
            <person name="Hattori M."/>
            <person name="Iida T."/>
        </authorList>
    </citation>
    <scope>NUCLEOTIDE SEQUENCE [LARGE SCALE GENOMIC DNA]</scope>
    <source>
        <strain>RIMD 2210633</strain>
    </source>
</reference>
<reference key="3">
    <citation type="journal article" date="1991" name="J. Gen. Microbiol.">
        <title>Purification and characterization of a lecithin-dependent haemolysin from Escherichia coli transformed by a Vibrio parahaemolyticus gene.</title>
        <authorList>
            <person name="Shinoda S."/>
            <person name="Matsuoka H."/>
            <person name="Tsuchie T."/>
            <person name="Miyoshi S."/>
            <person name="Yamamoto S."/>
            <person name="Taniguchi H."/>
            <person name="Mizuguchi Y."/>
        </authorList>
    </citation>
    <scope>PROTEIN SEQUENCE OF 20-47</scope>
    <scope>CHARACTERIZATION</scope>
</reference>
<comment type="function">
    <text>Phospholipase hydrolyzing both fatty acid esters of phospholipid, i.e. it hydrolyzes phosphatidylcholine (PC) to lysophosphatidylcholine (LPC) and then LPC to glycerophosphorylcholine (GPC).</text>
</comment>
<comment type="subcellular location">
    <subcellularLocation>
        <location>Secreted</location>
    </subcellularLocation>
</comment>
<comment type="PTM">
    <text>There are two forms of LDH. The LDH(S) may be a protein in which 13 residues of the N-terminal of LDH(L) are deleted.</text>
</comment>
<comment type="similarity">
    <text evidence="3">Belongs to the 'GDSL' lipolytic enzyme family.</text>
</comment>
<gene>
    <name type="ordered locus">VPA0226</name>
</gene>
<evidence type="ECO:0000250" key="1"/>
<evidence type="ECO:0000269" key="2">
    <source>
    </source>
</evidence>
<evidence type="ECO:0000305" key="3"/>
<organism>
    <name type="scientific">Vibrio parahaemolyticus serotype O3:K6 (strain RIMD 2210633)</name>
    <dbReference type="NCBI Taxonomy" id="223926"/>
    <lineage>
        <taxon>Bacteria</taxon>
        <taxon>Pseudomonadati</taxon>
        <taxon>Pseudomonadota</taxon>
        <taxon>Gammaproteobacteria</taxon>
        <taxon>Vibrionales</taxon>
        <taxon>Vibrionaceae</taxon>
        <taxon>Vibrio</taxon>
    </lineage>
</organism>
<feature type="signal peptide" evidence="2">
    <location>
        <begin position="1"/>
        <end position="19"/>
    </location>
</feature>
<feature type="chain" id="PRO_0000017849" description="Thermolabile hemolysin">
    <location>
        <begin position="20"/>
        <end position="418"/>
    </location>
</feature>
<feature type="active site" description="Nucleophile" evidence="1">
    <location>
        <position position="153"/>
    </location>
</feature>
<feature type="active site" evidence="1">
    <location>
        <position position="390"/>
    </location>
</feature>
<feature type="active site" evidence="1">
    <location>
        <position position="393"/>
    </location>
</feature>
<feature type="sequence variant" description="In LDH(S).">
    <location>
        <begin position="20"/>
        <end position="32"/>
    </location>
</feature>
<feature type="sequence conflict" description="In Ref. 3; AA sequence." evidence="3" ref="3">
    <original>A</original>
    <variation>T</variation>
    <location>
        <position position="20"/>
    </location>
</feature>
<feature type="sequence conflict" description="In Ref. 1; AAA27526." evidence="3" ref="1">
    <original>E</original>
    <variation>D</variation>
    <location>
        <position position="219"/>
    </location>
</feature>
<feature type="sequence conflict" description="In Ref. 1; AAA27526." evidence="3" ref="1">
    <original>D</original>
    <variation>N</variation>
    <location>
        <position position="390"/>
    </location>
</feature>
<name>HLT_VIBPA</name>
<keyword id="KW-0204">Cytolysis</keyword>
<keyword id="KW-0903">Direct protein sequencing</keyword>
<keyword id="KW-0354">Hemolysis</keyword>
<keyword id="KW-0378">Hydrolase</keyword>
<keyword id="KW-0442">Lipid degradation</keyword>
<keyword id="KW-0443">Lipid metabolism</keyword>
<keyword id="KW-0964">Secreted</keyword>
<keyword id="KW-0732">Signal</keyword>
<keyword id="KW-0800">Toxin</keyword>
<keyword id="KW-0843">Virulence</keyword>
<accession>Q99289</accession>
<proteinExistence type="evidence at protein level"/>
<protein>
    <recommendedName>
        <fullName>Thermolabile hemolysin</fullName>
        <shortName>TL</shortName>
    </recommendedName>
    <alternativeName>
        <fullName>Atypical phospholipase</fullName>
    </alternativeName>
    <alternativeName>
        <fullName>Lecithin-dependent hemolysin</fullName>
        <shortName>LDH</shortName>
    </alternativeName>
    <alternativeName>
        <fullName>Lysophospholipase</fullName>
    </alternativeName>
    <alternativeName>
        <fullName>Phospholipase A2</fullName>
    </alternativeName>
</protein>
<sequence length="418" mass="47392">MMKKTITLLTALLPLASAVAEEPTLSPEMVSASEVISTQENQTYTYVRCWYRTSYSKDDPATDWEWAKNEDGSYFTIDGYWWSSVSFKNMFYTNTSQNVIRQRCEATLDLANENADITFFAADNRFSYNHTIWSNDAAMQPDQINKVVALGDSLSDTGNIFNASQWRFPNPNSWFLGHFSNGFVWTEYIAKAKNLPLYNWAVGGAAGENQYIALTGVGEQVSSYLTYAKLAKNYKPANTLFTLEFGLNDFMNYNRGVPEVKADYAEALIRLTDAGAKNFMLMTLPDATKAPQFKYSTQEEIDKIRAKVLEMNEFIKAQAMYYKAQGYNITLFDTHALFETLTSAPEEHGFVNASDPCLDINRSSSVDYMYTHALRSECAASGAEKFVFWDVTHPTTATHRYVAEKMLESSNNLAEYRF</sequence>